<feature type="signal peptide" evidence="1">
    <location>
        <begin position="1"/>
        <end position="24"/>
    </location>
</feature>
<feature type="chain" id="PRO_0000406055" description="Envelope glycoprotein L" evidence="1">
    <location>
        <begin position="25"/>
        <end position="164"/>
    </location>
</feature>
<sequence length="164" mass="18030">MRSLDRYAIFILLACGLLWRPCLSSVPMPCCPIDSKKDVSGLPSVFEVKEIFFNYPQTCNYTNVAQFTYVPQGANVSTVVCANGFNLMSFILAVLQRVFEKPHNMGLLAENINKIRTDYALNFTAVNSESSRFNVVPVGRNGKVVTTTRVVKRSARSGSGAPPG</sequence>
<name>GL_EHV2</name>
<comment type="function">
    <text evidence="1">The heterodimer glycoprotein H-glycoprotein L is required for the fusion of viral and plasma membranes leading to virus entry into the host cell. Acts as a functional inhibitor of gH and maintains gH in an inhibited form. Upon binding to host integrins, gL dissociates from gH leading to activation of the viral fusion glycoproteins gB and gH.</text>
</comment>
<comment type="subunit">
    <text evidence="1">Interacts with glycoprotein H (gH); this interaction is necessary for the correct processing and cell surface expression of gH. The heterodimer gH/gL seems to interact with gB trimers during fusion.</text>
</comment>
<comment type="subcellular location">
    <subcellularLocation>
        <location evidence="1">Virion membrane</location>
        <topology evidence="1">Peripheral membrane protein</topology>
        <orientation evidence="1">Extracellular side</orientation>
    </subcellularLocation>
    <subcellularLocation>
        <location evidence="1">Host cell membrane</location>
        <topology evidence="1">Peripheral membrane protein</topology>
        <orientation evidence="1">Extracellular side</orientation>
    </subcellularLocation>
    <subcellularLocation>
        <location evidence="1">Host Golgi apparatus</location>
        <location evidence="1">Host trans-Golgi network</location>
    </subcellularLocation>
    <text evidence="1">gL associates with the extravirion surface through its binding to gH. During virion morphogenesis, this protein probably accumulates in the host trans-Golgi where secondary envelopment occurs.</text>
</comment>
<comment type="similarity">
    <text evidence="1">Belongs to the herpesviridae glycoprotein L family.</text>
</comment>
<protein>
    <recommendedName>
        <fullName evidence="1">Envelope glycoprotein L</fullName>
        <shortName evidence="1">gL</shortName>
    </recommendedName>
</protein>
<organism>
    <name type="scientific">Equine herpesvirus 2 (strain 86/87)</name>
    <name type="common">EHV-2</name>
    <dbReference type="NCBI Taxonomy" id="82831"/>
    <lineage>
        <taxon>Viruses</taxon>
        <taxon>Duplodnaviria</taxon>
        <taxon>Heunggongvirae</taxon>
        <taxon>Peploviricota</taxon>
        <taxon>Herviviricetes</taxon>
        <taxon>Herpesvirales</taxon>
        <taxon>Orthoherpesviridae</taxon>
        <taxon>Gammaherpesvirinae</taxon>
        <taxon>Percavirus</taxon>
        <taxon>Percavirus equidgamma2</taxon>
        <taxon>Equid gammaherpesvirus 2</taxon>
    </lineage>
</organism>
<accession>Q66649</accession>
<reference key="1">
    <citation type="journal article" date="1995" name="J. Mol. Biol.">
        <title>The DNA sequence of equine herpesvirus 2.</title>
        <authorList>
            <person name="Telford E.A.R."/>
            <person name="Watson M.S."/>
            <person name="Aird H.C."/>
            <person name="Perry J."/>
            <person name="Davison A.J."/>
        </authorList>
    </citation>
    <scope>NUCLEOTIDE SEQUENCE [LARGE SCALE GENOMIC DNA]</scope>
</reference>
<proteinExistence type="inferred from homology"/>
<gene>
    <name evidence="1" type="primary">gL</name>
    <name type="ORF">47</name>
</gene>
<keyword id="KW-1169">Fusion of virus membrane with host cell membrane</keyword>
<keyword id="KW-1168">Fusion of virus membrane with host membrane</keyword>
<keyword id="KW-0325">Glycoprotein</keyword>
<keyword id="KW-1032">Host cell membrane</keyword>
<keyword id="KW-1040">Host Golgi apparatus</keyword>
<keyword id="KW-1043">Host membrane</keyword>
<keyword id="KW-0472">Membrane</keyword>
<keyword id="KW-1185">Reference proteome</keyword>
<keyword id="KW-0732">Signal</keyword>
<keyword id="KW-0261">Viral envelope protein</keyword>
<keyword id="KW-1162">Viral penetration into host cytoplasm</keyword>
<keyword id="KW-0946">Virion</keyword>
<keyword id="KW-1160">Virus entry into host cell</keyword>
<organismHost>
    <name type="scientific">Equus caballus</name>
    <name type="common">Horse</name>
    <dbReference type="NCBI Taxonomy" id="9796"/>
</organismHost>
<dbReference type="EMBL" id="U20824">
    <property type="protein sequence ID" value="AAC13835.1"/>
    <property type="molecule type" value="Genomic_DNA"/>
</dbReference>
<dbReference type="PIR" id="S55642">
    <property type="entry name" value="S55642"/>
</dbReference>
<dbReference type="SMR" id="Q66649"/>
<dbReference type="KEGG" id="vg:1461073"/>
<dbReference type="Proteomes" id="UP000007083">
    <property type="component" value="Segment"/>
</dbReference>
<dbReference type="GO" id="GO:0044177">
    <property type="term" value="C:host cell Golgi apparatus"/>
    <property type="evidence" value="ECO:0007669"/>
    <property type="project" value="UniProtKB-SubCell"/>
</dbReference>
<dbReference type="GO" id="GO:0020002">
    <property type="term" value="C:host cell plasma membrane"/>
    <property type="evidence" value="ECO:0007669"/>
    <property type="project" value="UniProtKB-SubCell"/>
</dbReference>
<dbReference type="GO" id="GO:0016020">
    <property type="term" value="C:membrane"/>
    <property type="evidence" value="ECO:0007669"/>
    <property type="project" value="UniProtKB-KW"/>
</dbReference>
<dbReference type="GO" id="GO:0019031">
    <property type="term" value="C:viral envelope"/>
    <property type="evidence" value="ECO:0007669"/>
    <property type="project" value="UniProtKB-KW"/>
</dbReference>
<dbReference type="GO" id="GO:0055036">
    <property type="term" value="C:virion membrane"/>
    <property type="evidence" value="ECO:0007669"/>
    <property type="project" value="UniProtKB-SubCell"/>
</dbReference>
<dbReference type="GO" id="GO:0019064">
    <property type="term" value="P:fusion of virus membrane with host plasma membrane"/>
    <property type="evidence" value="ECO:0007669"/>
    <property type="project" value="UniProtKB-KW"/>
</dbReference>
<dbReference type="GO" id="GO:0046718">
    <property type="term" value="P:symbiont entry into host cell"/>
    <property type="evidence" value="ECO:0007669"/>
    <property type="project" value="UniProtKB-KW"/>
</dbReference>
<dbReference type="Gene3D" id="3.10.390.20">
    <property type="entry name" value="Viral glycoprotein L"/>
    <property type="match status" value="1"/>
</dbReference>
<dbReference type="HAMAP" id="MF_04034">
    <property type="entry name" value="HSV_GL_alphagamma"/>
    <property type="match status" value="1"/>
</dbReference>
<dbReference type="InterPro" id="IPR020175">
    <property type="entry name" value="Herpes_gL_rhadinovirus"/>
</dbReference>
<dbReference type="InterPro" id="IPR038313">
    <property type="entry name" value="Herpes_gL_rhadinovirus_sf"/>
</dbReference>
<dbReference type="InterPro" id="IPR034708">
    <property type="entry name" value="HSV_GL_alphagamma"/>
</dbReference>
<dbReference type="Pfam" id="PF11108">
    <property type="entry name" value="Phage_glycop_gL"/>
    <property type="match status" value="1"/>
</dbReference>
<evidence type="ECO:0000255" key="1">
    <source>
        <dbReference type="HAMAP-Rule" id="MF_04034"/>
    </source>
</evidence>